<comment type="similarity">
    <text evidence="1">Belongs to the Smg family.</text>
</comment>
<accession>B1LGP1</accession>
<reference key="1">
    <citation type="journal article" date="2008" name="J. Bacteriol.">
        <title>Insights into the environmental resistance gene pool from the genome sequence of the multidrug-resistant environmental isolate Escherichia coli SMS-3-5.</title>
        <authorList>
            <person name="Fricke W.F."/>
            <person name="Wright M.S."/>
            <person name="Lindell A.H."/>
            <person name="Harkins D.M."/>
            <person name="Baker-Austin C."/>
            <person name="Ravel J."/>
            <person name="Stepanauskas R."/>
        </authorList>
    </citation>
    <scope>NUCLEOTIDE SEQUENCE [LARGE SCALE GENOMIC DNA]</scope>
    <source>
        <strain>SMS-3-5 / SECEC</strain>
    </source>
</reference>
<name>SMG_ECOSM</name>
<protein>
    <recommendedName>
        <fullName evidence="1">Protein Smg</fullName>
    </recommendedName>
</protein>
<dbReference type="EMBL" id="CP000970">
    <property type="protein sequence ID" value="ACB15738.1"/>
    <property type="molecule type" value="Genomic_DNA"/>
</dbReference>
<dbReference type="RefSeq" id="WP_000460672.1">
    <property type="nucleotide sequence ID" value="NC_010498.1"/>
</dbReference>
<dbReference type="SMR" id="B1LGP1"/>
<dbReference type="GeneID" id="86948148"/>
<dbReference type="KEGG" id="ecm:EcSMS35_3580"/>
<dbReference type="HOGENOM" id="CLU_133242_0_0_6"/>
<dbReference type="Proteomes" id="UP000007011">
    <property type="component" value="Chromosome"/>
</dbReference>
<dbReference type="HAMAP" id="MF_00598">
    <property type="entry name" value="Smg"/>
    <property type="match status" value="1"/>
</dbReference>
<dbReference type="InterPro" id="IPR007456">
    <property type="entry name" value="Smg"/>
</dbReference>
<dbReference type="NCBIfam" id="NF002897">
    <property type="entry name" value="PRK03430.1"/>
    <property type="match status" value="1"/>
</dbReference>
<dbReference type="PANTHER" id="PTHR38692">
    <property type="entry name" value="PROTEIN SMG"/>
    <property type="match status" value="1"/>
</dbReference>
<dbReference type="PANTHER" id="PTHR38692:SF1">
    <property type="entry name" value="PROTEIN SMG"/>
    <property type="match status" value="1"/>
</dbReference>
<dbReference type="Pfam" id="PF04361">
    <property type="entry name" value="DUF494"/>
    <property type="match status" value="1"/>
</dbReference>
<organism>
    <name type="scientific">Escherichia coli (strain SMS-3-5 / SECEC)</name>
    <dbReference type="NCBI Taxonomy" id="439855"/>
    <lineage>
        <taxon>Bacteria</taxon>
        <taxon>Pseudomonadati</taxon>
        <taxon>Pseudomonadota</taxon>
        <taxon>Gammaproteobacteria</taxon>
        <taxon>Enterobacterales</taxon>
        <taxon>Enterobacteriaceae</taxon>
        <taxon>Escherichia</taxon>
    </lineage>
</organism>
<sequence>MFDVLMYLFETYIHTEAELRVDQDKLEQDLTDAGFDREDIYNALLWLEKLADYQEGLAEPMQLASDPLSMRIYTPEECERLDASCRGFLLFLEQIQVLNLETREMVIERVLALDTAEFDLEDLKWVILMVLFNIPGCENAYQQMEELLFEVNEGMLH</sequence>
<feature type="chain" id="PRO_1000129891" description="Protein Smg">
    <location>
        <begin position="1"/>
        <end position="157"/>
    </location>
</feature>
<proteinExistence type="inferred from homology"/>
<evidence type="ECO:0000255" key="1">
    <source>
        <dbReference type="HAMAP-Rule" id="MF_00598"/>
    </source>
</evidence>
<gene>
    <name evidence="1" type="primary">smg</name>
    <name type="ordered locus">EcSMS35_3580</name>
</gene>